<comment type="function">
    <text evidence="1">Part of the energy-coupling factor (ECF) transporter complex CbiMNOQ involved in cobalt import.</text>
</comment>
<comment type="pathway">
    <text evidence="1">Cofactor biosynthesis; adenosylcobalamin biosynthesis.</text>
</comment>
<comment type="subunit">
    <text evidence="1">Forms an energy-coupling factor (ECF) transporter complex composed of an ATP-binding protein (A component, CbiO), a transmembrane protein (T component, CbiQ) and 2 possible substrate-capture proteins (S components, CbiM and CbiN) of unknown stoichimetry.</text>
</comment>
<comment type="subcellular location">
    <subcellularLocation>
        <location evidence="1">Cell membrane</location>
        <topology evidence="1">Multi-pass membrane protein</topology>
    </subcellularLocation>
</comment>
<comment type="similarity">
    <text evidence="1">Belongs to the CbiM family.</text>
</comment>
<keyword id="KW-1003">Cell membrane</keyword>
<keyword id="KW-0169">Cobalamin biosynthesis</keyword>
<keyword id="KW-0170">Cobalt</keyword>
<keyword id="KW-0171">Cobalt transport</keyword>
<keyword id="KW-0406">Ion transport</keyword>
<keyword id="KW-0472">Membrane</keyword>
<keyword id="KW-0812">Transmembrane</keyword>
<keyword id="KW-1133">Transmembrane helix</keyword>
<keyword id="KW-0813">Transport</keyword>
<sequence length="231" mass="25029">MHIFEGFLPGPWWQIWWILSIPVFAYGIFRLNKLVKEKPEVLPLIAVSGAVIFVLSSLKLPSVTGSTSHPTGTGMAVILFGPAITSVLSAIVLLYQALFLAHGGITTFGANLMSMGIIGPFVAYAIYKTMMRLNVNFYVSAFVTATLADWVTYVVTSTQLALAFPANPGGVEGSLVAFLSVFAITQIPLAILEASLITLLFKYVLQAKGDLMVRLDVLTDSQVRKLKETKA</sequence>
<protein>
    <recommendedName>
        <fullName evidence="1">Putative cobalt transport protein CbiM 1</fullName>
    </recommendedName>
    <alternativeName>
        <fullName evidence="1">Energy-coupling factor transporter probable substrate-capture protein CbiM 1</fullName>
        <shortName evidence="1">ECF transporter S component CbiM 1</shortName>
    </alternativeName>
</protein>
<gene>
    <name evidence="1" type="primary">cbiM1</name>
    <name type="ordered locus">Mbar_A1216</name>
</gene>
<organism>
    <name type="scientific">Methanosarcina barkeri (strain Fusaro / DSM 804)</name>
    <dbReference type="NCBI Taxonomy" id="269797"/>
    <lineage>
        <taxon>Archaea</taxon>
        <taxon>Methanobacteriati</taxon>
        <taxon>Methanobacteriota</taxon>
        <taxon>Stenosarchaea group</taxon>
        <taxon>Methanomicrobia</taxon>
        <taxon>Methanosarcinales</taxon>
        <taxon>Methanosarcinaceae</taxon>
        <taxon>Methanosarcina</taxon>
    </lineage>
</organism>
<reference key="1">
    <citation type="journal article" date="2006" name="J. Bacteriol.">
        <title>The Methanosarcina barkeri genome: comparative analysis with Methanosarcina acetivorans and Methanosarcina mazei reveals extensive rearrangement within methanosarcinal genomes.</title>
        <authorList>
            <person name="Maeder D.L."/>
            <person name="Anderson I."/>
            <person name="Brettin T.S."/>
            <person name="Bruce D.C."/>
            <person name="Gilna P."/>
            <person name="Han C.S."/>
            <person name="Lapidus A."/>
            <person name="Metcalf W.W."/>
            <person name="Saunders E."/>
            <person name="Tapia R."/>
            <person name="Sowers K.R."/>
        </authorList>
    </citation>
    <scope>NUCLEOTIDE SEQUENCE [LARGE SCALE GENOMIC DNA]</scope>
    <source>
        <strain>Fusaro / DSM 804</strain>
    </source>
</reference>
<evidence type="ECO:0000255" key="1">
    <source>
        <dbReference type="HAMAP-Rule" id="MF_01462"/>
    </source>
</evidence>
<proteinExistence type="inferred from homology"/>
<accession>Q46D59</accession>
<name>CBIM1_METBF</name>
<feature type="chain" id="PRO_0000411158" description="Putative cobalt transport protein CbiM 1">
    <location>
        <begin position="1"/>
        <end position="231"/>
    </location>
</feature>
<feature type="transmembrane region" description="Helical" evidence="1">
    <location>
        <begin position="9"/>
        <end position="29"/>
    </location>
</feature>
<feature type="transmembrane region" description="Helical" evidence="1">
    <location>
        <begin position="41"/>
        <end position="61"/>
    </location>
</feature>
<feature type="transmembrane region" description="Helical" evidence="1">
    <location>
        <begin position="74"/>
        <end position="94"/>
    </location>
</feature>
<feature type="transmembrane region" description="Helical" evidence="1">
    <location>
        <begin position="107"/>
        <end position="127"/>
    </location>
</feature>
<feature type="transmembrane region" description="Helical" evidence="1">
    <location>
        <begin position="135"/>
        <end position="155"/>
    </location>
</feature>
<feature type="transmembrane region" description="Helical" evidence="1">
    <location>
        <begin position="181"/>
        <end position="201"/>
    </location>
</feature>
<dbReference type="EMBL" id="CP000099">
    <property type="protein sequence ID" value="AAZ70183.1"/>
    <property type="molecule type" value="Genomic_DNA"/>
</dbReference>
<dbReference type="SMR" id="Q46D59"/>
<dbReference type="STRING" id="269797.Mbar_A1216"/>
<dbReference type="PaxDb" id="269797-Mbar_A1216"/>
<dbReference type="KEGG" id="mba:Mbar_A1216"/>
<dbReference type="eggNOG" id="arCOG02248">
    <property type="taxonomic scope" value="Archaea"/>
</dbReference>
<dbReference type="HOGENOM" id="CLU_052508_3_0_2"/>
<dbReference type="OrthoDB" id="30946at2157"/>
<dbReference type="UniPathway" id="UPA00148"/>
<dbReference type="GO" id="GO:0043190">
    <property type="term" value="C:ATP-binding cassette (ABC) transporter complex"/>
    <property type="evidence" value="ECO:0007669"/>
    <property type="project" value="InterPro"/>
</dbReference>
<dbReference type="GO" id="GO:0015087">
    <property type="term" value="F:cobalt ion transmembrane transporter activity"/>
    <property type="evidence" value="ECO:0007669"/>
    <property type="project" value="UniProtKB-UniRule"/>
</dbReference>
<dbReference type="GO" id="GO:0009236">
    <property type="term" value="P:cobalamin biosynthetic process"/>
    <property type="evidence" value="ECO:0007669"/>
    <property type="project" value="UniProtKB-UniRule"/>
</dbReference>
<dbReference type="FunFam" id="1.10.1760.20:FF:000001">
    <property type="entry name" value="Cobalt transport protein CbiM"/>
    <property type="match status" value="1"/>
</dbReference>
<dbReference type="Gene3D" id="1.10.1760.20">
    <property type="match status" value="1"/>
</dbReference>
<dbReference type="HAMAP" id="MF_01462">
    <property type="entry name" value="CbiM"/>
    <property type="match status" value="1"/>
</dbReference>
<dbReference type="InterPro" id="IPR018024">
    <property type="entry name" value="CbiM"/>
</dbReference>
<dbReference type="InterPro" id="IPR002751">
    <property type="entry name" value="CbiM/NikMN"/>
</dbReference>
<dbReference type="NCBIfam" id="TIGR00123">
    <property type="entry name" value="cbiM"/>
    <property type="match status" value="1"/>
</dbReference>
<dbReference type="NCBIfam" id="NF006184">
    <property type="entry name" value="PRK08319.1"/>
    <property type="match status" value="1"/>
</dbReference>
<dbReference type="PANTHER" id="PTHR43627">
    <property type="match status" value="1"/>
</dbReference>
<dbReference type="PANTHER" id="PTHR43627:SF1">
    <property type="entry name" value="COBALT TRANSPORT PROTEIN CBIM"/>
    <property type="match status" value="1"/>
</dbReference>
<dbReference type="Pfam" id="PF01891">
    <property type="entry name" value="CbiM"/>
    <property type="match status" value="1"/>
</dbReference>